<protein>
    <recommendedName>
        <fullName>Ovomucoid</fullName>
    </recommendedName>
</protein>
<reference key="1">
    <citation type="journal article" date="1987" name="Biochemistry">
        <title>Ovomucoid third domains from 100 avian species: isolation, sequences, and hypervariability of enzyme-inhibitor contact residues.</title>
        <authorList>
            <person name="Laskowski M. Jr."/>
            <person name="Kato I."/>
            <person name="Ardelt W."/>
            <person name="Cook J."/>
            <person name="Denton A."/>
            <person name="Empie M.W."/>
            <person name="Kohr W.J."/>
            <person name="Park S.J."/>
            <person name="Parks K."/>
            <person name="Schatzley B.L."/>
            <person name="Schoenberger O.L."/>
            <person name="Tashiro M."/>
            <person name="Vichot G."/>
            <person name="Whatley H.E."/>
            <person name="Wieczorek A."/>
            <person name="Wieczorek M."/>
        </authorList>
    </citation>
    <scope>PROTEIN SEQUENCE</scope>
</reference>
<reference key="2">
    <citation type="journal article" date="1982" name="Biochemistry">
        <title>Thermodynamics and kinetics of single residue replacements in avian ovomucoid third domains: effect on inhibitor interactions with serine proteinases.</title>
        <authorList>
            <person name="Empie M.W."/>
            <person name="Laskowski M. Jr."/>
        </authorList>
    </citation>
    <scope>PROTEIN SEQUENCE</scope>
</reference>
<keyword id="KW-0903">Direct protein sequencing</keyword>
<keyword id="KW-1015">Disulfide bond</keyword>
<keyword id="KW-0325">Glycoprotein</keyword>
<keyword id="KW-0646">Protease inhibitor</keyword>
<keyword id="KW-1185">Reference proteome</keyword>
<keyword id="KW-0677">Repeat</keyword>
<keyword id="KW-0964">Secreted</keyword>
<keyword id="KW-0722">Serine protease inhibitor</keyword>
<name>IOVO_PAVCR</name>
<feature type="chain" id="PRO_0000073156" description="Ovomucoid">
    <location>
        <begin position="1" status="less than"/>
        <end position="56" status="greater than"/>
    </location>
</feature>
<feature type="domain" description="Kazal-like" evidence="1">
    <location>
        <begin position="6"/>
        <end position="56"/>
    </location>
</feature>
<feature type="site" description="Reactive bond 3">
    <location>
        <begin position="18"/>
        <end position="19"/>
    </location>
</feature>
<feature type="glycosylation site" description="N-linked (GlcNAc...) asparagine" evidence="2">
    <location>
        <position position="45"/>
    </location>
</feature>
<feature type="disulfide bond">
    <location>
        <begin position="8"/>
        <end position="38"/>
    </location>
</feature>
<feature type="disulfide bond">
    <location>
        <begin position="16"/>
        <end position="35"/>
    </location>
</feature>
<feature type="disulfide bond">
    <location>
        <begin position="24"/>
        <end position="56"/>
    </location>
</feature>
<feature type="non-terminal residue">
    <location>
        <position position="1"/>
    </location>
</feature>
<feature type="non-terminal residue">
    <location>
        <position position="56"/>
    </location>
</feature>
<evidence type="ECO:0000255" key="1">
    <source>
        <dbReference type="PROSITE-ProRule" id="PRU00798"/>
    </source>
</evidence>
<evidence type="ECO:0000269" key="2">
    <source>
    </source>
</evidence>
<proteinExistence type="evidence at protein level"/>
<comment type="subcellular location">
    <subcellularLocation>
        <location>Secreted</location>
    </subcellularLocation>
</comment>
<comment type="domain">
    <text>Avian ovomucoid consists of three homologous, tandem Kazal family inhibitory domains.</text>
</comment>
<dbReference type="PIR" id="G31440">
    <property type="entry name" value="G31440"/>
</dbReference>
<dbReference type="BMRB" id="P05609"/>
<dbReference type="SMR" id="P05609"/>
<dbReference type="iPTMnet" id="P05609"/>
<dbReference type="Proteomes" id="UP000694428">
    <property type="component" value="Unplaced"/>
</dbReference>
<dbReference type="GO" id="GO:0005615">
    <property type="term" value="C:extracellular space"/>
    <property type="evidence" value="ECO:0007669"/>
    <property type="project" value="UniProtKB-ARBA"/>
</dbReference>
<dbReference type="GO" id="GO:0004867">
    <property type="term" value="F:serine-type endopeptidase inhibitor activity"/>
    <property type="evidence" value="ECO:0007669"/>
    <property type="project" value="UniProtKB-KW"/>
</dbReference>
<dbReference type="CDD" id="cd00104">
    <property type="entry name" value="KAZAL_FS"/>
    <property type="match status" value="1"/>
</dbReference>
<dbReference type="FunFam" id="3.30.60.30:FF:000037">
    <property type="entry name" value="Ovomucoid"/>
    <property type="match status" value="1"/>
</dbReference>
<dbReference type="Gene3D" id="3.30.60.30">
    <property type="match status" value="1"/>
</dbReference>
<dbReference type="InterPro" id="IPR051597">
    <property type="entry name" value="Bifunctional_prot_inhibitor"/>
</dbReference>
<dbReference type="InterPro" id="IPR002350">
    <property type="entry name" value="Kazal_dom"/>
</dbReference>
<dbReference type="InterPro" id="IPR036058">
    <property type="entry name" value="Kazal_dom_sf"/>
</dbReference>
<dbReference type="InterPro" id="IPR001239">
    <property type="entry name" value="Prot_inh_Kazal-m"/>
</dbReference>
<dbReference type="PANTHER" id="PTHR47729:SF1">
    <property type="entry name" value="OVOMUCOID-LIKE-RELATED"/>
    <property type="match status" value="1"/>
</dbReference>
<dbReference type="PANTHER" id="PTHR47729">
    <property type="entry name" value="SERINE PEPTIDASE INHIBITOR, KAZAL TYPE 2, TANDEM DUPLICATE 1-RELATED"/>
    <property type="match status" value="1"/>
</dbReference>
<dbReference type="Pfam" id="PF00050">
    <property type="entry name" value="Kazal_1"/>
    <property type="match status" value="1"/>
</dbReference>
<dbReference type="PRINTS" id="PR00290">
    <property type="entry name" value="KAZALINHBTR"/>
</dbReference>
<dbReference type="SMART" id="SM00280">
    <property type="entry name" value="KAZAL"/>
    <property type="match status" value="1"/>
</dbReference>
<dbReference type="SUPFAM" id="SSF100895">
    <property type="entry name" value="Kazal-type serine protease inhibitors"/>
    <property type="match status" value="1"/>
</dbReference>
<dbReference type="PROSITE" id="PS00282">
    <property type="entry name" value="KAZAL_1"/>
    <property type="match status" value="1"/>
</dbReference>
<dbReference type="PROSITE" id="PS51465">
    <property type="entry name" value="KAZAL_2"/>
    <property type="match status" value="1"/>
</dbReference>
<organism>
    <name type="scientific">Pavo cristatus</name>
    <name type="common">Indian peafowl</name>
    <name type="synonym">Blue peafowl</name>
    <dbReference type="NCBI Taxonomy" id="9049"/>
    <lineage>
        <taxon>Eukaryota</taxon>
        <taxon>Metazoa</taxon>
        <taxon>Chordata</taxon>
        <taxon>Craniata</taxon>
        <taxon>Vertebrata</taxon>
        <taxon>Euteleostomi</taxon>
        <taxon>Archelosauria</taxon>
        <taxon>Archosauria</taxon>
        <taxon>Dinosauria</taxon>
        <taxon>Saurischia</taxon>
        <taxon>Theropoda</taxon>
        <taxon>Coelurosauria</taxon>
        <taxon>Aves</taxon>
        <taxon>Neognathae</taxon>
        <taxon>Galloanserae</taxon>
        <taxon>Galliformes</taxon>
        <taxon>Phasianidae</taxon>
        <taxon>Phasianinae</taxon>
        <taxon>Pavo</taxon>
    </lineage>
</organism>
<sequence>LAAVSVDCSEYPKPACTLEHRPLCGSDNKTYGNKCNFCNAVVESNGTLTLSHFGKC</sequence>
<accession>P05609</accession>